<dbReference type="EMBL" id="CP000728">
    <property type="protein sequence ID" value="ABS40667.1"/>
    <property type="molecule type" value="Genomic_DNA"/>
</dbReference>
<dbReference type="RefSeq" id="WP_003358923.1">
    <property type="nucleotide sequence ID" value="NC_009699.1"/>
</dbReference>
<dbReference type="SMR" id="A7GE42"/>
<dbReference type="GeneID" id="92938492"/>
<dbReference type="KEGG" id="cbf:CLI_1792"/>
<dbReference type="HOGENOM" id="CLU_113688_0_2_9"/>
<dbReference type="Proteomes" id="UP000002410">
    <property type="component" value="Chromosome"/>
</dbReference>
<dbReference type="GO" id="GO:0005829">
    <property type="term" value="C:cytosol"/>
    <property type="evidence" value="ECO:0007669"/>
    <property type="project" value="TreeGrafter"/>
</dbReference>
<dbReference type="GO" id="GO:0003723">
    <property type="term" value="F:RNA binding"/>
    <property type="evidence" value="ECO:0007669"/>
    <property type="project" value="UniProtKB-UniRule"/>
</dbReference>
<dbReference type="GO" id="GO:0006355">
    <property type="term" value="P:regulation of DNA-templated transcription"/>
    <property type="evidence" value="ECO:0007669"/>
    <property type="project" value="InterPro"/>
</dbReference>
<dbReference type="GO" id="GO:0043487">
    <property type="term" value="P:regulation of RNA stability"/>
    <property type="evidence" value="ECO:0007669"/>
    <property type="project" value="TreeGrafter"/>
</dbReference>
<dbReference type="GO" id="GO:0045974">
    <property type="term" value="P:regulation of translation, ncRNA-mediated"/>
    <property type="evidence" value="ECO:0007669"/>
    <property type="project" value="TreeGrafter"/>
</dbReference>
<dbReference type="CDD" id="cd01716">
    <property type="entry name" value="Hfq"/>
    <property type="match status" value="1"/>
</dbReference>
<dbReference type="FunFam" id="2.30.30.100:FF:000012">
    <property type="entry name" value="RNA-binding protein Hfq"/>
    <property type="match status" value="1"/>
</dbReference>
<dbReference type="Gene3D" id="2.30.30.100">
    <property type="match status" value="1"/>
</dbReference>
<dbReference type="HAMAP" id="MF_00436">
    <property type="entry name" value="Hfq"/>
    <property type="match status" value="1"/>
</dbReference>
<dbReference type="InterPro" id="IPR005001">
    <property type="entry name" value="Hfq"/>
</dbReference>
<dbReference type="InterPro" id="IPR010920">
    <property type="entry name" value="LSM_dom_sf"/>
</dbReference>
<dbReference type="InterPro" id="IPR047575">
    <property type="entry name" value="Sm"/>
</dbReference>
<dbReference type="NCBIfam" id="TIGR02383">
    <property type="entry name" value="Hfq"/>
    <property type="match status" value="1"/>
</dbReference>
<dbReference type="NCBIfam" id="NF001602">
    <property type="entry name" value="PRK00395.1"/>
    <property type="match status" value="1"/>
</dbReference>
<dbReference type="PANTHER" id="PTHR34772">
    <property type="entry name" value="RNA-BINDING PROTEIN HFQ"/>
    <property type="match status" value="1"/>
</dbReference>
<dbReference type="PANTHER" id="PTHR34772:SF1">
    <property type="entry name" value="RNA-BINDING PROTEIN HFQ"/>
    <property type="match status" value="1"/>
</dbReference>
<dbReference type="Pfam" id="PF17209">
    <property type="entry name" value="Hfq"/>
    <property type="match status" value="1"/>
</dbReference>
<dbReference type="SUPFAM" id="SSF50182">
    <property type="entry name" value="Sm-like ribonucleoproteins"/>
    <property type="match status" value="1"/>
</dbReference>
<dbReference type="PROSITE" id="PS52002">
    <property type="entry name" value="SM"/>
    <property type="match status" value="1"/>
</dbReference>
<comment type="function">
    <text evidence="1">RNA chaperone that binds small regulatory RNA (sRNAs) and mRNAs to facilitate mRNA translational regulation in response to envelope stress, environmental stress and changes in metabolite concentrations. Also binds with high specificity to tRNAs.</text>
</comment>
<comment type="subunit">
    <text evidence="1">Homohexamer.</text>
</comment>
<comment type="similarity">
    <text evidence="1">Belongs to the Hfq family.</text>
</comment>
<keyword id="KW-0694">RNA-binding</keyword>
<keyword id="KW-0346">Stress response</keyword>
<reference key="1">
    <citation type="submission" date="2007-06" db="EMBL/GenBank/DDBJ databases">
        <authorList>
            <person name="Brinkac L.M."/>
            <person name="Daugherty S."/>
            <person name="Dodson R.J."/>
            <person name="Madupu R."/>
            <person name="Brown J.L."/>
            <person name="Bruce D."/>
            <person name="Detter C."/>
            <person name="Munk C."/>
            <person name="Smith L.A."/>
            <person name="Smith T.J."/>
            <person name="White O."/>
            <person name="Brettin T.S."/>
        </authorList>
    </citation>
    <scope>NUCLEOTIDE SEQUENCE [LARGE SCALE GENOMIC DNA]</scope>
    <source>
        <strain>Langeland / NCTC 10281 / Type F</strain>
    </source>
</reference>
<feature type="chain" id="PRO_1000025904" description="RNA-binding protein Hfq">
    <location>
        <begin position="1"/>
        <end position="85"/>
    </location>
</feature>
<feature type="domain" description="Sm" evidence="2">
    <location>
        <begin position="10"/>
        <end position="70"/>
    </location>
</feature>
<protein>
    <recommendedName>
        <fullName evidence="1">RNA-binding protein Hfq</fullName>
    </recommendedName>
</protein>
<accession>A7GE42</accession>
<gene>
    <name evidence="1" type="primary">hfq</name>
    <name type="ordered locus">CLI_1792</name>
</gene>
<sequence length="85" mass="9664">MTKVVNNLQDIFLNGARKNRIPVTIYLTNGFQLKGFVKGFDNFTVILDSDGKQMMIYKHAISTINPAKPLLFVQNPNGDDYKDKE</sequence>
<name>HFQ_CLOBL</name>
<proteinExistence type="inferred from homology"/>
<evidence type="ECO:0000255" key="1">
    <source>
        <dbReference type="HAMAP-Rule" id="MF_00436"/>
    </source>
</evidence>
<evidence type="ECO:0000255" key="2">
    <source>
        <dbReference type="PROSITE-ProRule" id="PRU01346"/>
    </source>
</evidence>
<organism>
    <name type="scientific">Clostridium botulinum (strain Langeland / NCTC 10281 / Type F)</name>
    <dbReference type="NCBI Taxonomy" id="441772"/>
    <lineage>
        <taxon>Bacteria</taxon>
        <taxon>Bacillati</taxon>
        <taxon>Bacillota</taxon>
        <taxon>Clostridia</taxon>
        <taxon>Eubacteriales</taxon>
        <taxon>Clostridiaceae</taxon>
        <taxon>Clostridium</taxon>
    </lineage>
</organism>